<accession>A8FNH9</accession>
<organism>
    <name type="scientific">Campylobacter jejuni subsp. jejuni serotype O:6 (strain 81116 / NCTC 11828)</name>
    <dbReference type="NCBI Taxonomy" id="407148"/>
    <lineage>
        <taxon>Bacteria</taxon>
        <taxon>Pseudomonadati</taxon>
        <taxon>Campylobacterota</taxon>
        <taxon>Epsilonproteobacteria</taxon>
        <taxon>Campylobacterales</taxon>
        <taxon>Campylobacteraceae</taxon>
        <taxon>Campylobacter</taxon>
    </lineage>
</organism>
<gene>
    <name evidence="8" type="primary">nspC</name>
    <name type="ordered locus">C8J_1418</name>
</gene>
<dbReference type="EC" id="4.1.1.96" evidence="4"/>
<dbReference type="EMBL" id="CP000814">
    <property type="protein sequence ID" value="ABV53016.1"/>
    <property type="molecule type" value="Genomic_DNA"/>
</dbReference>
<dbReference type="RefSeq" id="WP_002877469.1">
    <property type="nucleotide sequence ID" value="NC_009839.1"/>
</dbReference>
<dbReference type="PDB" id="3N29">
    <property type="method" value="X-ray"/>
    <property type="resolution" value="1.90 A"/>
    <property type="chains" value="A/B=1-382"/>
</dbReference>
<dbReference type="PDBsum" id="3N29"/>
<dbReference type="SMR" id="A8FNH9"/>
<dbReference type="KEGG" id="cju:C8J_1418"/>
<dbReference type="HOGENOM" id="CLU_038560_0_0_7"/>
<dbReference type="BioCyc" id="MetaCyc:MONOMER-17344"/>
<dbReference type="EvolutionaryTrace" id="A8FNH9"/>
<dbReference type="GO" id="GO:0005737">
    <property type="term" value="C:cytoplasm"/>
    <property type="evidence" value="ECO:0007669"/>
    <property type="project" value="UniProtKB-SubCell"/>
</dbReference>
<dbReference type="GO" id="GO:0016831">
    <property type="term" value="F:carboxy-lyase activity"/>
    <property type="evidence" value="ECO:0000314"/>
    <property type="project" value="UniProtKB"/>
</dbReference>
<dbReference type="GO" id="GO:0008836">
    <property type="term" value="F:diaminopimelate decarboxylase activity"/>
    <property type="evidence" value="ECO:0007669"/>
    <property type="project" value="TreeGrafter"/>
</dbReference>
<dbReference type="GO" id="GO:0042803">
    <property type="term" value="F:protein homodimerization activity"/>
    <property type="evidence" value="ECO:0000314"/>
    <property type="project" value="UniProtKB"/>
</dbReference>
<dbReference type="GO" id="GO:0030170">
    <property type="term" value="F:pyridoxal phosphate binding"/>
    <property type="evidence" value="ECO:0000314"/>
    <property type="project" value="UniProtKB"/>
</dbReference>
<dbReference type="GO" id="GO:0009089">
    <property type="term" value="P:lysine biosynthetic process via diaminopimelate"/>
    <property type="evidence" value="ECO:0007669"/>
    <property type="project" value="TreeGrafter"/>
</dbReference>
<dbReference type="GO" id="GO:0045312">
    <property type="term" value="P:nor-spermidine biosynthetic process"/>
    <property type="evidence" value="ECO:0000314"/>
    <property type="project" value="UniProtKB"/>
</dbReference>
<dbReference type="GO" id="GO:0008295">
    <property type="term" value="P:spermidine biosynthetic process"/>
    <property type="evidence" value="ECO:0000314"/>
    <property type="project" value="UniProtKB"/>
</dbReference>
<dbReference type="CDD" id="cd06829">
    <property type="entry name" value="PLPDE_III_CANSDC"/>
    <property type="match status" value="1"/>
</dbReference>
<dbReference type="FunFam" id="3.20.20.10:FF:000012">
    <property type="entry name" value="Carboxynorspermidine/carboxyspermidine decarboxylase"/>
    <property type="match status" value="1"/>
</dbReference>
<dbReference type="Gene3D" id="3.20.20.10">
    <property type="entry name" value="Alanine racemase"/>
    <property type="match status" value="1"/>
</dbReference>
<dbReference type="Gene3D" id="2.40.37.10">
    <property type="entry name" value="Lyase, Ornithine Decarboxylase, Chain A, domain 1"/>
    <property type="match status" value="1"/>
</dbReference>
<dbReference type="InterPro" id="IPR009006">
    <property type="entry name" value="Ala_racemase/Decarboxylase_C"/>
</dbReference>
<dbReference type="InterPro" id="IPR022643">
    <property type="entry name" value="De-COase2_C"/>
</dbReference>
<dbReference type="InterPro" id="IPR005730">
    <property type="entry name" value="Nsp_de-COase"/>
</dbReference>
<dbReference type="InterPro" id="IPR029066">
    <property type="entry name" value="PLP-binding_barrel"/>
</dbReference>
<dbReference type="NCBIfam" id="TIGR01047">
    <property type="entry name" value="nspC"/>
    <property type="match status" value="1"/>
</dbReference>
<dbReference type="PANTHER" id="PTHR43727:SF1">
    <property type="entry name" value="CARBOXYNORSPERMIDINE_CARBOXYSPERMIDINE DECARBOXYLASE"/>
    <property type="match status" value="1"/>
</dbReference>
<dbReference type="PANTHER" id="PTHR43727">
    <property type="entry name" value="DIAMINOPIMELATE DECARBOXYLASE"/>
    <property type="match status" value="1"/>
</dbReference>
<dbReference type="Pfam" id="PF00278">
    <property type="entry name" value="Orn_DAP_Arg_deC"/>
    <property type="match status" value="1"/>
</dbReference>
<dbReference type="PIRSF" id="PIRSF038941">
    <property type="entry name" value="NspC"/>
    <property type="match status" value="1"/>
</dbReference>
<dbReference type="SUPFAM" id="SSF50621">
    <property type="entry name" value="Alanine racemase C-terminal domain-like"/>
    <property type="match status" value="1"/>
</dbReference>
<dbReference type="SUPFAM" id="SSF51419">
    <property type="entry name" value="PLP-binding barrel"/>
    <property type="match status" value="1"/>
</dbReference>
<name>NSPC_CAMJ8</name>
<keyword id="KW-0002">3D-structure</keyword>
<keyword id="KW-0963">Cytoplasm</keyword>
<keyword id="KW-0210">Decarboxylase</keyword>
<keyword id="KW-0456">Lyase</keyword>
<keyword id="KW-0620">Polyamine biosynthesis</keyword>
<keyword id="KW-0663">Pyridoxal phosphate</keyword>
<keyword id="KW-0745">Spermidine biosynthesis</keyword>
<comment type="function">
    <text evidence="4 5">Catalyzes the decarboxylation of carboxynorspermidine and carboxyspermidine in vitro. In vivo, responsible for synthesizing spermidine, but not sym-norspermidine.</text>
</comment>
<comment type="catalytic activity">
    <reaction evidence="4">
        <text>carboxynorspermidine + H(+) = norspermidine + CO2</text>
        <dbReference type="Rhea" id="RHEA:34099"/>
        <dbReference type="ChEBI" id="CHEBI:15378"/>
        <dbReference type="ChEBI" id="CHEBI:16526"/>
        <dbReference type="ChEBI" id="CHEBI:57920"/>
        <dbReference type="ChEBI" id="CHEBI:65070"/>
        <dbReference type="EC" id="4.1.1.96"/>
    </reaction>
</comment>
<comment type="catalytic activity">
    <reaction evidence="4">
        <text>carboxyspermidine + H(+) = spermidine + CO2</text>
        <dbReference type="Rhea" id="RHEA:34095"/>
        <dbReference type="ChEBI" id="CHEBI:15378"/>
        <dbReference type="ChEBI" id="CHEBI:16526"/>
        <dbReference type="ChEBI" id="CHEBI:57834"/>
        <dbReference type="ChEBI" id="CHEBI:65072"/>
        <dbReference type="EC" id="4.1.1.96"/>
    </reaction>
</comment>
<comment type="cofactor">
    <cofactor evidence="4">
        <name>pyridoxal 5'-phosphate</name>
        <dbReference type="ChEBI" id="CHEBI:597326"/>
    </cofactor>
</comment>
<comment type="biophysicochemical properties">
    <kinetics>
        <KM evidence="4">4.1 mM for carboxyspermidine</KM>
        <KM evidence="4">2.1 mM for carboxynorspermidine</KM>
        <text>KM values are given with the protein sequence containing Glu instead of Lys at position 184, the effect of the variation on activity is unclear.</text>
    </kinetics>
</comment>
<comment type="subunit">
    <text evidence="4">Homodimer.</text>
</comment>
<comment type="subcellular location">
    <subcellularLocation>
        <location evidence="1">Cytoplasm</location>
    </subcellularLocation>
</comment>
<comment type="disruption phenotype">
    <text evidence="5">Growth is highly compromised in polyamine auxotrophic bacteria, but can be restored by exogenous spermidine, sym-homospermidine and to a lesser extent by sym-norspermidine.</text>
</comment>
<comment type="similarity">
    <text evidence="3">Belongs to the Orn/Lys/Arg decarboxylase class-II family. NspC subfamily.</text>
</comment>
<reference key="1">
    <citation type="journal article" date="2007" name="J. Bacteriol.">
        <title>The complete genome sequence of Campylobacter jejuni strain 81116 (NCTC11828).</title>
        <authorList>
            <person name="Pearson B.M."/>
            <person name="Gaskin D.J.H."/>
            <person name="Segers R.P.A.M."/>
            <person name="Wells J.M."/>
            <person name="Nuijten P.J.M."/>
            <person name="van Vliet A.H.M."/>
        </authorList>
    </citation>
    <scope>NUCLEOTIDE SEQUENCE [LARGE SCALE GENOMIC DNA]</scope>
    <source>
        <strain>81116 / NCTC 11828</strain>
    </source>
</reference>
<reference key="2">
    <citation type="journal article" date="2011" name="J. Biol. Chem.">
        <title>Alternative spermidine biosynthetic route is critical for growth of Campylobacter jejuni and is the dominant polyamine pathway in human gut microbiota.</title>
        <authorList>
            <person name="Hanfrey C.C."/>
            <person name="Pearson B.M."/>
            <person name="Hazeldine S."/>
            <person name="Lee J."/>
            <person name="Gaskin D.J."/>
            <person name="Woster P.M."/>
            <person name="Phillips M.A."/>
            <person name="Michael A.J."/>
        </authorList>
    </citation>
    <scope>FUNCTION</scope>
    <scope>PATHWAY</scope>
    <scope>DISRUPTION PHENOTYPE</scope>
    <source>
        <strain evidence="5">81116 / NCTC 11828</strain>
    </source>
</reference>
<reference key="3">
    <citation type="journal article" date="2010" name="J. Biol. Chem.">
        <title>Evolution of substrate specificity within a diverse family of beta/alpha-barrel-fold basic amino acid decarboxylases: X-ray structure determination of enzymes with specificity for L-arginine and carboxynorspermidine.</title>
        <authorList>
            <person name="Deng X."/>
            <person name="Lee J."/>
            <person name="Michael A.J."/>
            <person name="Tomchick D.R."/>
            <person name="Goldsmith E.J."/>
            <person name="Phillips M.A."/>
        </authorList>
    </citation>
    <scope>X-RAY CRYSTALLOGRAPHY (1.90 ANGSTROMS) OF VARIANT GLU-184 IN COMPLEX WITH REACTION PRODUCT NORSPERMIDINE AND PYRIDOXAL PHOSPHATE</scope>
    <scope>FUNCTION</scope>
    <scope>CATALYTIC ACTIVITY</scope>
    <scope>COFACTOR</scope>
    <scope>BIOPHYSICOCHEMICAL PROPERTIES</scope>
    <scope>SUBUNIT</scope>
    <scope>PYRIDOXAL PHOSPHATE AT LYS-41</scope>
    <source>
        <strain evidence="4">81116 / NCTC 11828</strain>
    </source>
</reference>
<protein>
    <recommendedName>
        <fullName evidence="6 7 8">Carboxynorspermidine/carboxyspermidine decarboxylase</fullName>
        <shortName evidence="2">CANS DC/CAS DC</shortName>
        <shortName evidence="6 7">CANSDC/CASDC</shortName>
        <ecNumber evidence="4">4.1.1.96</ecNumber>
    </recommendedName>
</protein>
<feature type="chain" id="PRO_0000420244" description="Carboxynorspermidine/carboxyspermidine decarboxylase">
    <location>
        <begin position="1"/>
        <end position="382"/>
    </location>
</feature>
<feature type="binding site" evidence="4">
    <location>
        <position position="236"/>
    </location>
    <ligand>
        <name>substrate</name>
    </ligand>
</feature>
<feature type="binding site" evidence="4">
    <location>
        <position position="272"/>
    </location>
    <ligand>
        <name>substrate</name>
    </ligand>
</feature>
<feature type="modified residue" description="N6-(pyridoxal phosphate)lysine" evidence="4">
    <location>
        <position position="41"/>
    </location>
</feature>
<feature type="strand" evidence="9">
    <location>
        <begin position="8"/>
        <end position="14"/>
    </location>
</feature>
<feature type="helix" evidence="9">
    <location>
        <begin position="15"/>
        <end position="32"/>
    </location>
</feature>
<feature type="strand" evidence="9">
    <location>
        <begin position="35"/>
        <end position="39"/>
    </location>
</feature>
<feature type="turn" evidence="9">
    <location>
        <begin position="40"/>
        <end position="42"/>
    </location>
</feature>
<feature type="helix" evidence="9">
    <location>
        <begin position="46"/>
        <end position="48"/>
    </location>
</feature>
<feature type="helix" evidence="9">
    <location>
        <begin position="49"/>
        <end position="55"/>
    </location>
</feature>
<feature type="strand" evidence="9">
    <location>
        <begin position="58"/>
        <end position="63"/>
    </location>
</feature>
<feature type="helix" evidence="9">
    <location>
        <begin position="64"/>
        <end position="73"/>
    </location>
</feature>
<feature type="strand" evidence="9">
    <location>
        <begin position="76"/>
        <end position="84"/>
    </location>
</feature>
<feature type="helix" evidence="9">
    <location>
        <begin position="87"/>
        <end position="96"/>
    </location>
</feature>
<feature type="strand" evidence="9">
    <location>
        <begin position="98"/>
        <end position="104"/>
    </location>
</feature>
<feature type="helix" evidence="9">
    <location>
        <begin position="105"/>
        <end position="111"/>
    </location>
</feature>
<feature type="helix" evidence="9">
    <location>
        <begin position="112"/>
        <end position="114"/>
    </location>
</feature>
<feature type="strand" evidence="9">
    <location>
        <begin position="118"/>
        <end position="124"/>
    </location>
</feature>
<feature type="strand" evidence="9">
    <location>
        <begin position="145"/>
        <end position="147"/>
    </location>
</feature>
<feature type="helix" evidence="9">
    <location>
        <begin position="149"/>
        <end position="152"/>
    </location>
</feature>
<feature type="strand" evidence="9">
    <location>
        <begin position="162"/>
        <end position="164"/>
    </location>
</feature>
<feature type="strand" evidence="9">
    <location>
        <begin position="169"/>
        <end position="171"/>
    </location>
</feature>
<feature type="helix" evidence="9">
    <location>
        <begin position="173"/>
        <end position="187"/>
    </location>
</feature>
<feature type="helix" evidence="9">
    <location>
        <begin position="188"/>
        <end position="190"/>
    </location>
</feature>
<feature type="turn" evidence="9">
    <location>
        <begin position="191"/>
        <end position="193"/>
    </location>
</feature>
<feature type="strand" evidence="9">
    <location>
        <begin position="195"/>
        <end position="198"/>
    </location>
</feature>
<feature type="helix" evidence="9">
    <location>
        <begin position="212"/>
        <end position="226"/>
    </location>
</feature>
<feature type="strand" evidence="9">
    <location>
        <begin position="229"/>
        <end position="232"/>
    </location>
</feature>
<feature type="helix" evidence="9">
    <location>
        <begin position="236"/>
        <end position="239"/>
    </location>
</feature>
<feature type="strand" evidence="9">
    <location>
        <begin position="242"/>
        <end position="264"/>
    </location>
</feature>
<feature type="helix" evidence="9">
    <location>
        <begin position="266"/>
        <end position="269"/>
    </location>
</feature>
<feature type="helix" evidence="9">
    <location>
        <begin position="271"/>
        <end position="275"/>
    </location>
</feature>
<feature type="strand" evidence="9">
    <location>
        <begin position="285"/>
        <end position="289"/>
    </location>
</feature>
<feature type="strand" evidence="9">
    <location>
        <begin position="304"/>
        <end position="309"/>
    </location>
</feature>
<feature type="strand" evidence="9">
    <location>
        <begin position="311"/>
        <end position="313"/>
    </location>
</feature>
<feature type="strand" evidence="9">
    <location>
        <begin position="318"/>
        <end position="326"/>
    </location>
</feature>
<feature type="strand" evidence="9">
    <location>
        <begin position="333"/>
        <end position="338"/>
    </location>
</feature>
<feature type="strand" evidence="9">
    <location>
        <begin position="340"/>
        <end position="343"/>
    </location>
</feature>
<feature type="helix" evidence="9">
    <location>
        <begin position="344"/>
        <end position="346"/>
    </location>
</feature>
<feature type="helix" evidence="9">
    <location>
        <begin position="350"/>
        <end position="352"/>
    </location>
</feature>
<feature type="strand" evidence="9">
    <location>
        <begin position="357"/>
        <end position="361"/>
    </location>
</feature>
<feature type="strand" evidence="9">
    <location>
        <begin position="367"/>
        <end position="371"/>
    </location>
</feature>
<feature type="helix" evidence="9">
    <location>
        <begin position="376"/>
        <end position="379"/>
    </location>
</feature>
<evidence type="ECO:0000250" key="1"/>
<evidence type="ECO:0000250" key="2">
    <source>
        <dbReference type="UniProtKB" id="Q56575"/>
    </source>
</evidence>
<evidence type="ECO:0000255" key="3"/>
<evidence type="ECO:0000269" key="4">
    <source>
    </source>
</evidence>
<evidence type="ECO:0000269" key="5">
    <source>
    </source>
</evidence>
<evidence type="ECO:0000303" key="6">
    <source>
    </source>
</evidence>
<evidence type="ECO:0000303" key="7">
    <source>
    </source>
</evidence>
<evidence type="ECO:0000312" key="8">
    <source>
        <dbReference type="EMBL" id="ABV53016.1"/>
    </source>
</evidence>
<evidence type="ECO:0007829" key="9">
    <source>
        <dbReference type="PDB" id="3N29"/>
    </source>
</evidence>
<sequence>MFYEKIQTPAYILEEDKLRKNCELLASVGEKSGAKVLLALKGFAFSGAMKIVGEYLKGCTCSGLWEAKFAKEYMDKEIHTYSPAFKEDEIGEIASLSHHIVFNSLAQFHKFQSKTQKNSLGLRCNVEFSLAPKELYNPCGRYSRLGIRAKDFENVDLNAIEGLHFHALCEESADALEAVLKVFKEKFGKWIGQMKWVNFGGGHHITKKGYDVEKLIALCKNFSDKYGVQVYLEPGEAVGWQTGNLVASVVDIIENEKQIAILDTSSEAHMPDTIIMPYTSEVLNARILATRENEKISDLKENEFAYLLTGNTCLAGDVMGEYAFDKKLKIGDKIVFLDQIHYTIVKNTTFNGIRLPNLMLLDHKNELQMIREFSYKDYSLRN</sequence>
<proteinExistence type="evidence at protein level"/>